<comment type="similarity">
    <text evidence="1">Belongs to the dGTPase family. Type 2 subfamily.</text>
</comment>
<evidence type="ECO:0000255" key="1">
    <source>
        <dbReference type="HAMAP-Rule" id="MF_01212"/>
    </source>
</evidence>
<evidence type="ECO:0000255" key="2">
    <source>
        <dbReference type="PROSITE-ProRule" id="PRU01175"/>
    </source>
</evidence>
<dbReference type="EMBL" id="CP000252">
    <property type="protein sequence ID" value="ABC78661.1"/>
    <property type="molecule type" value="Genomic_DNA"/>
</dbReference>
<dbReference type="RefSeq" id="WP_011418678.1">
    <property type="nucleotide sequence ID" value="NC_007759.1"/>
</dbReference>
<dbReference type="SMR" id="Q2LX49"/>
<dbReference type="FunCoup" id="Q2LX49">
    <property type="interactions" value="131"/>
</dbReference>
<dbReference type="STRING" id="56780.SYN_01066"/>
<dbReference type="KEGG" id="sat:SYN_01066"/>
<dbReference type="eggNOG" id="COG0232">
    <property type="taxonomic scope" value="Bacteria"/>
</dbReference>
<dbReference type="HOGENOM" id="CLU_028163_1_0_7"/>
<dbReference type="InParanoid" id="Q2LX49"/>
<dbReference type="OrthoDB" id="9803619at2"/>
<dbReference type="Proteomes" id="UP000001933">
    <property type="component" value="Chromosome"/>
</dbReference>
<dbReference type="GO" id="GO:0016793">
    <property type="term" value="F:triphosphoric monoester hydrolase activity"/>
    <property type="evidence" value="ECO:0007669"/>
    <property type="project" value="InterPro"/>
</dbReference>
<dbReference type="CDD" id="cd00077">
    <property type="entry name" value="HDc"/>
    <property type="match status" value="1"/>
</dbReference>
<dbReference type="Gene3D" id="1.10.3210.10">
    <property type="entry name" value="Hypothetical protein af1432"/>
    <property type="match status" value="1"/>
</dbReference>
<dbReference type="HAMAP" id="MF_01212">
    <property type="entry name" value="dGTPase_type2"/>
    <property type="match status" value="1"/>
</dbReference>
<dbReference type="InterPro" id="IPR006261">
    <property type="entry name" value="dGTPase"/>
</dbReference>
<dbReference type="InterPro" id="IPR051094">
    <property type="entry name" value="Diverse_Catalytic_Enzymes"/>
</dbReference>
<dbReference type="InterPro" id="IPR023023">
    <property type="entry name" value="dNTPase_2"/>
</dbReference>
<dbReference type="InterPro" id="IPR003607">
    <property type="entry name" value="HD/PDEase_dom"/>
</dbReference>
<dbReference type="InterPro" id="IPR006674">
    <property type="entry name" value="HD_domain"/>
</dbReference>
<dbReference type="InterPro" id="IPR026875">
    <property type="entry name" value="PHydrolase_assoc_dom"/>
</dbReference>
<dbReference type="NCBIfam" id="TIGR01353">
    <property type="entry name" value="dGTP_triPase"/>
    <property type="match status" value="1"/>
</dbReference>
<dbReference type="NCBIfam" id="NF002326">
    <property type="entry name" value="PRK01286.1-1"/>
    <property type="match status" value="1"/>
</dbReference>
<dbReference type="PANTHER" id="PTHR35795:SF1">
    <property type="entry name" value="BIS(5'-NUCLEOSYL)-TETRAPHOSPHATASE, SYMMETRICAL"/>
    <property type="match status" value="1"/>
</dbReference>
<dbReference type="PANTHER" id="PTHR35795">
    <property type="entry name" value="SLR1885 PROTEIN"/>
    <property type="match status" value="1"/>
</dbReference>
<dbReference type="Pfam" id="PF01966">
    <property type="entry name" value="HD"/>
    <property type="match status" value="1"/>
</dbReference>
<dbReference type="Pfam" id="PF13286">
    <property type="entry name" value="HD_assoc"/>
    <property type="match status" value="1"/>
</dbReference>
<dbReference type="SMART" id="SM00471">
    <property type="entry name" value="HDc"/>
    <property type="match status" value="1"/>
</dbReference>
<dbReference type="SUPFAM" id="SSF109604">
    <property type="entry name" value="HD-domain/PDEase-like"/>
    <property type="match status" value="1"/>
</dbReference>
<dbReference type="PROSITE" id="PS51831">
    <property type="entry name" value="HD"/>
    <property type="match status" value="1"/>
</dbReference>
<reference key="1">
    <citation type="journal article" date="2007" name="Proc. Natl. Acad. Sci. U.S.A.">
        <title>The genome of Syntrophus aciditrophicus: life at the thermodynamic limit of microbial growth.</title>
        <authorList>
            <person name="McInerney M.J."/>
            <person name="Rohlin L."/>
            <person name="Mouttaki H."/>
            <person name="Kim U."/>
            <person name="Krupp R.S."/>
            <person name="Rios-Hernandez L."/>
            <person name="Sieber J."/>
            <person name="Struchtemeyer C.G."/>
            <person name="Bhattacharyya A."/>
            <person name="Campbell J.W."/>
            <person name="Gunsalus R.P."/>
        </authorList>
    </citation>
    <scope>NUCLEOTIDE SEQUENCE [LARGE SCALE GENOMIC DNA]</scope>
    <source>
        <strain>SB</strain>
    </source>
</reference>
<keyword id="KW-0378">Hydrolase</keyword>
<keyword id="KW-1185">Reference proteome</keyword>
<protein>
    <recommendedName>
        <fullName evidence="1">Deoxyguanosinetriphosphate triphosphohydrolase-like protein</fullName>
    </recommendedName>
</protein>
<gene>
    <name type="ordered locus">SYNAS_27820</name>
    <name type="ORF">SYN_01066</name>
</gene>
<sequence length="400" mass="46539">MTAREFLEATEKEKLAPYATRSADSAGRTLHGDEPDDYRTCFQRDRDRILYSKVFKDLQHKTQVFLINEGDFYRTRLTHTLEVAQHARTFARALRLNEDLCEAIAYAHDLGHPPFGHSGEETLNDLLKDDGGFEHNIQSLRVVDFLEKRYQRYDGLNLCFETREGIARHNTTHDHPDTPPEFQNYSQASLEAQVVNIADPLAYCAHDLEDALNAGYLRMKDLRNMENPLVRRVFERCSSRYPDFLKADTVLQSRILVRTLIEEANIAVIRQTSRNIELYGISSVEEARSLPEDVVAAPAGVWKNFDALKAYLFENVYRKPQVCIMNEKGKLIIRRIFHHLEKRPEMLPGIFKTRFDEAADSSGKRRVLADYISGMTDRYVMDLYMMMFEPYEKVMFEFRE</sequence>
<name>DGTL1_SYNAS</name>
<feature type="chain" id="PRO_1000066442" description="Deoxyguanosinetriphosphate triphosphohydrolase-like protein">
    <location>
        <begin position="1"/>
        <end position="400"/>
    </location>
</feature>
<feature type="domain" description="HD" evidence="2">
    <location>
        <begin position="76"/>
        <end position="204"/>
    </location>
</feature>
<proteinExistence type="inferred from homology"/>
<accession>Q2LX49</accession>
<organism>
    <name type="scientific">Syntrophus aciditrophicus (strain SB)</name>
    <dbReference type="NCBI Taxonomy" id="56780"/>
    <lineage>
        <taxon>Bacteria</taxon>
        <taxon>Pseudomonadati</taxon>
        <taxon>Thermodesulfobacteriota</taxon>
        <taxon>Syntrophia</taxon>
        <taxon>Syntrophales</taxon>
        <taxon>Syntrophaceae</taxon>
        <taxon>Syntrophus</taxon>
    </lineage>
</organism>